<dbReference type="EMBL" id="X64346">
    <property type="protein sequence ID" value="CAA45644.1"/>
    <property type="molecule type" value="Genomic_DNA"/>
</dbReference>
<dbReference type="RefSeq" id="NP_040222.1">
    <property type="nucleotide sequence ID" value="NC_001350.1"/>
</dbReference>
<dbReference type="KEGG" id="vg:1682502"/>
<dbReference type="Proteomes" id="UP000000587">
    <property type="component" value="Segment"/>
</dbReference>
<dbReference type="GO" id="GO:0044177">
    <property type="term" value="C:host cell Golgi apparatus"/>
    <property type="evidence" value="ECO:0007669"/>
    <property type="project" value="UniProtKB-SubCell"/>
</dbReference>
<dbReference type="GO" id="GO:0044196">
    <property type="term" value="C:host cell nucleolus"/>
    <property type="evidence" value="ECO:0007669"/>
    <property type="project" value="UniProtKB-SubCell"/>
</dbReference>
<dbReference type="GO" id="GO:0044423">
    <property type="term" value="C:virion component"/>
    <property type="evidence" value="ECO:0007669"/>
    <property type="project" value="UniProtKB-KW"/>
</dbReference>
<dbReference type="InterPro" id="IPR002580">
    <property type="entry name" value="Herpes_UL24"/>
</dbReference>
<dbReference type="Pfam" id="PF01646">
    <property type="entry name" value="Herpes_UL24"/>
    <property type="match status" value="1"/>
</dbReference>
<name>UL24_SHV21</name>
<comment type="function">
    <text evidence="1">May participate in nuclear egress of viral particles. Plays a role in the dispersal of several host nucleolar proteins including NCL/nucleolin and NPM1. Since deletion of host NCL/nucleolin negatively impact on nuclear egress, UL24 supposedly acts on this process through its effect on host nucleoli (By similarity).</text>
</comment>
<comment type="subcellular location">
    <subcellularLocation>
        <location evidence="1">Virion</location>
    </subcellularLocation>
    <subcellularLocation>
        <location evidence="1">Host cytoplasm</location>
    </subcellularLocation>
    <subcellularLocation>
        <location evidence="1">Host nucleus</location>
        <location evidence="1">Host nucleolus</location>
    </subcellularLocation>
    <subcellularLocation>
        <location evidence="1">Host Golgi apparatus</location>
    </subcellularLocation>
</comment>
<comment type="induction">
    <text>Expressed late in the infection cycle.</text>
</comment>
<comment type="similarity">
    <text evidence="3">Belongs to the herpesviridae UL24 family.</text>
</comment>
<feature type="chain" id="PRO_0000115989" description="Protein UL24 homolog">
    <location>
        <begin position="1"/>
        <end position="303"/>
    </location>
</feature>
<feature type="region of interest" description="Disordered" evidence="2">
    <location>
        <begin position="235"/>
        <end position="280"/>
    </location>
</feature>
<feature type="compositionally biased region" description="Basic and acidic residues" evidence="2">
    <location>
        <begin position="235"/>
        <end position="249"/>
    </location>
</feature>
<feature type="compositionally biased region" description="Basic residues" evidence="2">
    <location>
        <begin position="257"/>
        <end position="277"/>
    </location>
</feature>
<sequence length="303" mass="34943">MLSVIKQRDKEVLAHLPNKRKIAGNKAHLETYKKLAKYTVSASIFKFLSISHPCPLRAKTRLFFEVSLGNRIADCVMLTSCGETRICYVIELKTCMTSNLDLISDIRKSQRSQGLCQLADTVNFIHNYAPLGRQAWTVLPILIFKSQKTLKTLHIETPKFPVNLTHTSEEKLSCFLWSRADVEIRKKIHLAPKPKRIFKWDSLLDSTSTEHSAYRQKLIERNKKKCFTLQNQTSKFRDRTNKKSNDQLRARQANARPCKKKQHNNKRLRNNRKHGGKVSRLTTTTSFSSEAAFSNYPVSTHKL</sequence>
<evidence type="ECO:0000250" key="1"/>
<evidence type="ECO:0000256" key="2">
    <source>
        <dbReference type="SAM" id="MobiDB-lite"/>
    </source>
</evidence>
<evidence type="ECO:0000305" key="3"/>
<protein>
    <recommendedName>
        <fullName>Protein UL24 homolog</fullName>
    </recommendedName>
</protein>
<proteinExistence type="evidence at transcript level"/>
<accession>Q01005</accession>
<organismHost>
    <name type="scientific">Saimiri sciureus</name>
    <name type="common">Common squirrel monkey</name>
    <dbReference type="NCBI Taxonomy" id="9521"/>
</organismHost>
<keyword id="KW-1035">Host cytoplasm</keyword>
<keyword id="KW-1040">Host Golgi apparatus</keyword>
<keyword id="KW-1048">Host nucleus</keyword>
<keyword id="KW-0426">Late protein</keyword>
<keyword id="KW-1185">Reference proteome</keyword>
<keyword id="KW-0946">Virion</keyword>
<reference key="1">
    <citation type="journal article" date="1992" name="J. Virol.">
        <title>Primary structure of the herpesvirus saimiri genome.</title>
        <authorList>
            <person name="Albrecht J.-C."/>
            <person name="Nicholas J."/>
            <person name="Biller D."/>
            <person name="Cameron K.R."/>
            <person name="Biesinger B."/>
            <person name="Newman C."/>
            <person name="Wittmann S."/>
            <person name="Craxton M.A."/>
            <person name="Coleman H."/>
            <person name="Fleckenstein B."/>
            <person name="Honess R.W."/>
        </authorList>
    </citation>
    <scope>NUCLEOTIDE SEQUENCE [LARGE SCALE GENOMIC DNA]</scope>
</reference>
<gene>
    <name type="primary">20</name>
</gene>
<organism>
    <name type="scientific">Saimiriine herpesvirus 2 (strain 11)</name>
    <name type="common">SaHV-2</name>
    <name type="synonym">Herpesvirus saimiri</name>
    <dbReference type="NCBI Taxonomy" id="10383"/>
    <lineage>
        <taxon>Viruses</taxon>
        <taxon>Duplodnaviria</taxon>
        <taxon>Heunggongvirae</taxon>
        <taxon>Peploviricota</taxon>
        <taxon>Herviviricetes</taxon>
        <taxon>Herpesvirales</taxon>
        <taxon>Orthoherpesviridae</taxon>
        <taxon>Gammaherpesvirinae</taxon>
        <taxon>Rhadinovirus</taxon>
        <taxon>Rhadinovirus saimiriinegamma2</taxon>
        <taxon>Saimiriine herpesvirus 2</taxon>
    </lineage>
</organism>